<protein>
    <recommendedName>
        <fullName>Phage shock protein C</fullName>
    </recommendedName>
</protein>
<comment type="function">
    <text evidence="3">The phage shock protein (psp) operon (pspABCDE) may play a significant role in the competition for survival under nutrient- or energy-limited conditions. PspC is involved in transcription regulation.</text>
</comment>
<comment type="subunit">
    <text evidence="2">Interacts with PspA.</text>
</comment>
<comment type="interaction">
    <interactant intactId="EBI-1134561">
        <id>P0AFN2</id>
    </interactant>
    <interactant intactId="EBI-557109">
        <id>P0AEC3</id>
        <label>arcB</label>
    </interactant>
    <organismsDiffer>false</organismsDiffer>
    <experiments>3</experiments>
</comment>
<comment type="interaction">
    <interactant intactId="EBI-1134561">
        <id>P0AFN2</id>
    </interactant>
    <interactant intactId="EBI-1123459">
        <id>P0AFM6</id>
        <label>pspA</label>
    </interactant>
    <organismsDiffer>false</organismsDiffer>
    <experiments>9</experiments>
</comment>
<comment type="interaction">
    <interactant intactId="EBI-1134561">
        <id>P0AFN2</id>
    </interactant>
    <interactant intactId="EBI-6408513">
        <id>P0AFM9</id>
        <label>pspB</label>
    </interactant>
    <organismsDiffer>false</organismsDiffer>
    <experiments>5</experiments>
</comment>
<comment type="interaction">
    <interactant intactId="EBI-1134561">
        <id>P0AFN2</id>
    </interactant>
    <interactant intactId="EBI-25641301">
        <id>P32696</id>
        <label>pspG</label>
    </interactant>
    <organismsDiffer>false</organismsDiffer>
    <experiments>3</experiments>
</comment>
<comment type="subcellular location">
    <subcellularLocation>
        <location evidence="4">Cell inner membrane</location>
        <topology evidence="4">Single-pass membrane protein</topology>
    </subcellularLocation>
</comment>
<comment type="induction">
    <text evidence="3">By heat, ethanol, osmotic shock and infection by filamentous bacteriophages.</text>
</comment>
<comment type="similarity">
    <text evidence="4">Belongs to the phageshock PspC family.</text>
</comment>
<sequence>MAGINLNKKLWRIPQQGMVRGVCAGIANYFDVPVKLVRILVVLSIFFGLALFTLVAYIILSFALDPMPDNMAFGEQLPSSSELLDEVDRELAASETRLREMERYVTSDTFTLRSRFRQL</sequence>
<feature type="chain" id="PRO_0000097074" description="Phage shock protein C">
    <location>
        <begin position="1"/>
        <end position="119"/>
    </location>
</feature>
<feature type="transmembrane region" description="Helical" evidence="1">
    <location>
        <begin position="39"/>
        <end position="59"/>
    </location>
</feature>
<keyword id="KW-0010">Activator</keyword>
<keyword id="KW-0997">Cell inner membrane</keyword>
<keyword id="KW-1003">Cell membrane</keyword>
<keyword id="KW-0472">Membrane</keyword>
<keyword id="KW-1185">Reference proteome</keyword>
<keyword id="KW-0346">Stress response</keyword>
<keyword id="KW-0804">Transcription</keyword>
<keyword id="KW-0805">Transcription regulation</keyword>
<keyword id="KW-0812">Transmembrane</keyword>
<keyword id="KW-1133">Transmembrane helix</keyword>
<gene>
    <name type="primary">pspC</name>
    <name type="ordered locus">b1306</name>
    <name type="ordered locus">JW1299</name>
</gene>
<organism>
    <name type="scientific">Escherichia coli (strain K12)</name>
    <dbReference type="NCBI Taxonomy" id="83333"/>
    <lineage>
        <taxon>Bacteria</taxon>
        <taxon>Pseudomonadati</taxon>
        <taxon>Pseudomonadota</taxon>
        <taxon>Gammaproteobacteria</taxon>
        <taxon>Enterobacterales</taxon>
        <taxon>Enterobacteriaceae</taxon>
        <taxon>Escherichia</taxon>
    </lineage>
</organism>
<name>PSPC_ECOLI</name>
<dbReference type="EMBL" id="X57560">
    <property type="protein sequence ID" value="CAA40791.1"/>
    <property type="molecule type" value="Genomic_DNA"/>
</dbReference>
<dbReference type="EMBL" id="U00096">
    <property type="protein sequence ID" value="AAC74388.1"/>
    <property type="molecule type" value="Genomic_DNA"/>
</dbReference>
<dbReference type="EMBL" id="AP009048">
    <property type="protein sequence ID" value="BAA14875.1"/>
    <property type="molecule type" value="Genomic_DNA"/>
</dbReference>
<dbReference type="PIR" id="S17123">
    <property type="entry name" value="S17123"/>
</dbReference>
<dbReference type="RefSeq" id="NP_415822.1">
    <property type="nucleotide sequence ID" value="NC_000913.3"/>
</dbReference>
<dbReference type="RefSeq" id="WP_000907387.1">
    <property type="nucleotide sequence ID" value="NZ_STEB01000005.1"/>
</dbReference>
<dbReference type="SMR" id="P0AFN2"/>
<dbReference type="BioGRID" id="4263228">
    <property type="interactions" value="526"/>
</dbReference>
<dbReference type="ComplexPortal" id="CPX-5892">
    <property type="entry name" value="PspBC inner membrane stress response complex"/>
</dbReference>
<dbReference type="DIP" id="DIP-48215N"/>
<dbReference type="FunCoup" id="P0AFN2">
    <property type="interactions" value="38"/>
</dbReference>
<dbReference type="IntAct" id="P0AFN2">
    <property type="interactions" value="6"/>
</dbReference>
<dbReference type="STRING" id="511145.b1306"/>
<dbReference type="jPOST" id="P0AFN2"/>
<dbReference type="PaxDb" id="511145-b1306"/>
<dbReference type="EnsemblBacteria" id="AAC74388">
    <property type="protein sequence ID" value="AAC74388"/>
    <property type="gene ID" value="b1306"/>
</dbReference>
<dbReference type="GeneID" id="93775432"/>
<dbReference type="GeneID" id="945499"/>
<dbReference type="KEGG" id="ecj:JW1299"/>
<dbReference type="KEGG" id="eco:b1306"/>
<dbReference type="KEGG" id="ecoc:C3026_07660"/>
<dbReference type="PATRIC" id="fig|1411691.4.peg.973"/>
<dbReference type="EchoBASE" id="EB0771"/>
<dbReference type="eggNOG" id="COG1983">
    <property type="taxonomic scope" value="Bacteria"/>
</dbReference>
<dbReference type="HOGENOM" id="CLU_137949_2_0_6"/>
<dbReference type="InParanoid" id="P0AFN2"/>
<dbReference type="OMA" id="MEAYVTS"/>
<dbReference type="OrthoDB" id="7359894at2"/>
<dbReference type="PhylomeDB" id="P0AFN2"/>
<dbReference type="BioCyc" id="EcoCyc:EG10778-MONOMER"/>
<dbReference type="PRO" id="PR:P0AFN2"/>
<dbReference type="Proteomes" id="UP000000625">
    <property type="component" value="Chromosome"/>
</dbReference>
<dbReference type="GO" id="GO:0005886">
    <property type="term" value="C:plasma membrane"/>
    <property type="evidence" value="ECO:0000314"/>
    <property type="project" value="EcoCyc"/>
</dbReference>
<dbReference type="GO" id="GO:0010557">
    <property type="term" value="P:positive regulation of macromolecule biosynthetic process"/>
    <property type="evidence" value="ECO:0000315"/>
    <property type="project" value="EcoCyc"/>
</dbReference>
<dbReference type="GO" id="GO:0080135">
    <property type="term" value="P:regulation of cellular response to stress"/>
    <property type="evidence" value="ECO:0000303"/>
    <property type="project" value="ComplexPortal"/>
</dbReference>
<dbReference type="InterPro" id="IPR014320">
    <property type="entry name" value="Phageshock_PspC"/>
</dbReference>
<dbReference type="InterPro" id="IPR007168">
    <property type="entry name" value="Phageshock_PspC_N"/>
</dbReference>
<dbReference type="InterPro" id="IPR052027">
    <property type="entry name" value="PspC"/>
</dbReference>
<dbReference type="NCBIfam" id="TIGR02978">
    <property type="entry name" value="phageshock_pspC"/>
    <property type="match status" value="1"/>
</dbReference>
<dbReference type="NCBIfam" id="NF007973">
    <property type="entry name" value="PRK10697.1"/>
    <property type="match status" value="1"/>
</dbReference>
<dbReference type="PANTHER" id="PTHR33885">
    <property type="entry name" value="PHAGE SHOCK PROTEIN C"/>
    <property type="match status" value="1"/>
</dbReference>
<dbReference type="PANTHER" id="PTHR33885:SF3">
    <property type="entry name" value="PHAGE SHOCK PROTEIN C"/>
    <property type="match status" value="1"/>
</dbReference>
<dbReference type="Pfam" id="PF04024">
    <property type="entry name" value="PspC"/>
    <property type="match status" value="1"/>
</dbReference>
<reference key="1">
    <citation type="journal article" date="1991" name="J. Mol. Biol.">
        <title>Characterization and sequence of the Escherichia coli stress-induced psp operon.</title>
        <authorList>
            <person name="Brissette J.L."/>
            <person name="Weiner L."/>
            <person name="Ripmaster T.L."/>
            <person name="Model P."/>
        </authorList>
    </citation>
    <scope>NUCLEOTIDE SEQUENCE [GENOMIC DNA]</scope>
    <scope>FUNCTION</scope>
    <scope>INDUCTION</scope>
    <source>
        <strain>K12</strain>
    </source>
</reference>
<reference key="2">
    <citation type="journal article" date="1996" name="DNA Res.">
        <title>A 570-kb DNA sequence of the Escherichia coli K-12 genome corresponding to the 28.0-40.1 min region on the linkage map.</title>
        <authorList>
            <person name="Aiba H."/>
            <person name="Baba T."/>
            <person name="Fujita K."/>
            <person name="Hayashi K."/>
            <person name="Inada T."/>
            <person name="Isono K."/>
            <person name="Itoh T."/>
            <person name="Kasai H."/>
            <person name="Kashimoto K."/>
            <person name="Kimura S."/>
            <person name="Kitakawa M."/>
            <person name="Kitagawa M."/>
            <person name="Makino K."/>
            <person name="Miki T."/>
            <person name="Mizobuchi K."/>
            <person name="Mori H."/>
            <person name="Mori T."/>
            <person name="Motomura K."/>
            <person name="Nakade S."/>
            <person name="Nakamura Y."/>
            <person name="Nashimoto H."/>
            <person name="Nishio Y."/>
            <person name="Oshima T."/>
            <person name="Saito N."/>
            <person name="Sampei G."/>
            <person name="Seki Y."/>
            <person name="Sivasundaram S."/>
            <person name="Tagami H."/>
            <person name="Takeda J."/>
            <person name="Takemoto K."/>
            <person name="Takeuchi Y."/>
            <person name="Wada C."/>
            <person name="Yamamoto Y."/>
            <person name="Horiuchi T."/>
        </authorList>
    </citation>
    <scope>NUCLEOTIDE SEQUENCE [LARGE SCALE GENOMIC DNA]</scope>
    <source>
        <strain>K12 / W3110 / ATCC 27325 / DSM 5911</strain>
    </source>
</reference>
<reference key="3">
    <citation type="journal article" date="1997" name="Science">
        <title>The complete genome sequence of Escherichia coli K-12.</title>
        <authorList>
            <person name="Blattner F.R."/>
            <person name="Plunkett G. III"/>
            <person name="Bloch C.A."/>
            <person name="Perna N.T."/>
            <person name="Burland V."/>
            <person name="Riley M."/>
            <person name="Collado-Vides J."/>
            <person name="Glasner J.D."/>
            <person name="Rode C.K."/>
            <person name="Mayhew G.F."/>
            <person name="Gregor J."/>
            <person name="Davis N.W."/>
            <person name="Kirkpatrick H.A."/>
            <person name="Goeden M.A."/>
            <person name="Rose D.J."/>
            <person name="Mau B."/>
            <person name="Shao Y."/>
        </authorList>
    </citation>
    <scope>NUCLEOTIDE SEQUENCE [LARGE SCALE GENOMIC DNA]</scope>
    <source>
        <strain>K12 / MG1655 / ATCC 47076</strain>
    </source>
</reference>
<reference key="4">
    <citation type="journal article" date="2006" name="Mol. Syst. Biol.">
        <title>Highly accurate genome sequences of Escherichia coli K-12 strains MG1655 and W3110.</title>
        <authorList>
            <person name="Hayashi K."/>
            <person name="Morooka N."/>
            <person name="Yamamoto Y."/>
            <person name="Fujita K."/>
            <person name="Isono K."/>
            <person name="Choi S."/>
            <person name="Ohtsubo E."/>
            <person name="Baba T."/>
            <person name="Wanner B.L."/>
            <person name="Mori H."/>
            <person name="Horiuchi T."/>
        </authorList>
    </citation>
    <scope>NUCLEOTIDE SEQUENCE [LARGE SCALE GENOMIC DNA]</scope>
    <source>
        <strain>K12 / W3110 / ATCC 27325 / DSM 5911</strain>
    </source>
</reference>
<reference key="5">
    <citation type="journal article" date="2003" name="J. Bacteriol.">
        <title>Interactions between phage-shock proteins in Escherichia coli.</title>
        <authorList>
            <person name="Adams H."/>
            <person name="Teertstra W."/>
            <person name="Demmers J."/>
            <person name="Boesten R."/>
            <person name="Tommassen J."/>
        </authorList>
    </citation>
    <scope>INTERACTION WITH PSPA</scope>
    <source>
        <strain>K12</strain>
    </source>
</reference>
<proteinExistence type="evidence at protein level"/>
<accession>P0AFN2</accession>
<accession>P23855</accession>
<evidence type="ECO:0000255" key="1"/>
<evidence type="ECO:0000269" key="2">
    <source>
    </source>
</evidence>
<evidence type="ECO:0000269" key="3">
    <source>
    </source>
</evidence>
<evidence type="ECO:0000305" key="4"/>